<proteinExistence type="inferred from homology"/>
<reference key="1">
    <citation type="submission" date="2007-11" db="EMBL/GenBank/DDBJ databases">
        <title>The genome sequence of the hyperthermophilic bacterium Thermotoga neapolitana.</title>
        <authorList>
            <person name="Lim S.K."/>
            <person name="Kim J.S."/>
            <person name="Cha S.H."/>
            <person name="Park B.C."/>
            <person name="Lee D.S."/>
            <person name="Tae H.S."/>
            <person name="Kim S.-J."/>
            <person name="Kim J.J."/>
            <person name="Park K.J."/>
            <person name="Lee S.Y."/>
        </authorList>
    </citation>
    <scope>NUCLEOTIDE SEQUENCE [LARGE SCALE GENOMIC DNA]</scope>
    <source>
        <strain>ATCC 49049 / DSM 4359 / NBRC 107923 / NS-E</strain>
    </source>
</reference>
<sequence length="282" mass="30427">MRIDTVNVLLEALPYIKEFYGKTFVIKFGGSAMKEEKAKKAFIQDIILLKYTGIKPVIVHGGGPAISQMMKELGIEPVFKNGHRVTDERTMEIVEMVLVGKINKEIVMNINLHGGRAVGICGKDSKLIVAEKETKYGDLGFVGKVKQVNPEILHALIENDYIPVIAPVGIGEDGHSYNINADTAAAEIAKSLMAEKLILLTDVDGVLKDGKLLSTLTPEEAENLIKDGVVTGGMIPKVECAISAVREGVGAVHIINGGLEHAILLEIFSRKGIGTMIKESEG</sequence>
<comment type="function">
    <text evidence="1">Catalyzes the ATP-dependent phosphorylation of N-acetyl-L-glutamate.</text>
</comment>
<comment type="catalytic activity">
    <reaction evidence="1">
        <text>N-acetyl-L-glutamate + ATP = N-acetyl-L-glutamyl 5-phosphate + ADP</text>
        <dbReference type="Rhea" id="RHEA:14629"/>
        <dbReference type="ChEBI" id="CHEBI:30616"/>
        <dbReference type="ChEBI" id="CHEBI:44337"/>
        <dbReference type="ChEBI" id="CHEBI:57936"/>
        <dbReference type="ChEBI" id="CHEBI:456216"/>
        <dbReference type="EC" id="2.7.2.8"/>
    </reaction>
</comment>
<comment type="pathway">
    <text evidence="1">Amino-acid biosynthesis; L-arginine biosynthesis; N(2)-acetyl-L-ornithine from L-glutamate: step 2/4.</text>
</comment>
<comment type="subcellular location">
    <subcellularLocation>
        <location evidence="1">Cytoplasm</location>
    </subcellularLocation>
</comment>
<comment type="similarity">
    <text evidence="1">Belongs to the acetylglutamate kinase family. ArgB subfamily.</text>
</comment>
<name>ARGB_THENN</name>
<gene>
    <name evidence="1" type="primary">argB</name>
    <name type="ordered locus">CTN_1180</name>
</gene>
<organism>
    <name type="scientific">Thermotoga neapolitana (strain ATCC 49049 / DSM 4359 / NBRC 107923 / NS-E)</name>
    <dbReference type="NCBI Taxonomy" id="309803"/>
    <lineage>
        <taxon>Bacteria</taxon>
        <taxon>Thermotogati</taxon>
        <taxon>Thermotogota</taxon>
        <taxon>Thermotogae</taxon>
        <taxon>Thermotogales</taxon>
        <taxon>Thermotogaceae</taxon>
        <taxon>Thermotoga</taxon>
    </lineage>
</organism>
<feature type="chain" id="PRO_1000118364" description="Acetylglutamate kinase">
    <location>
        <begin position="1"/>
        <end position="282"/>
    </location>
</feature>
<feature type="binding site" evidence="1">
    <location>
        <begin position="62"/>
        <end position="63"/>
    </location>
    <ligand>
        <name>substrate</name>
    </ligand>
</feature>
<feature type="binding site" evidence="1">
    <location>
        <position position="84"/>
    </location>
    <ligand>
        <name>substrate</name>
    </ligand>
</feature>
<feature type="binding site" evidence="1">
    <location>
        <position position="178"/>
    </location>
    <ligand>
        <name>substrate</name>
    </ligand>
</feature>
<feature type="site" description="Transition state stabilizer" evidence="1">
    <location>
        <position position="27"/>
    </location>
</feature>
<feature type="site" description="Transition state stabilizer" evidence="1">
    <location>
        <position position="237"/>
    </location>
</feature>
<protein>
    <recommendedName>
        <fullName evidence="1">Acetylglutamate kinase</fullName>
        <ecNumber evidence="1">2.7.2.8</ecNumber>
    </recommendedName>
    <alternativeName>
        <fullName evidence="1">N-acetyl-L-glutamate 5-phosphotransferase</fullName>
    </alternativeName>
    <alternativeName>
        <fullName evidence="1">NAG kinase</fullName>
        <shortName evidence="1">NAGK</shortName>
    </alternativeName>
</protein>
<keyword id="KW-0028">Amino-acid biosynthesis</keyword>
<keyword id="KW-0055">Arginine biosynthesis</keyword>
<keyword id="KW-0067">ATP-binding</keyword>
<keyword id="KW-0963">Cytoplasm</keyword>
<keyword id="KW-0418">Kinase</keyword>
<keyword id="KW-0547">Nucleotide-binding</keyword>
<keyword id="KW-0808">Transferase</keyword>
<accession>B9K8S3</accession>
<evidence type="ECO:0000255" key="1">
    <source>
        <dbReference type="HAMAP-Rule" id="MF_00082"/>
    </source>
</evidence>
<dbReference type="EC" id="2.7.2.8" evidence="1"/>
<dbReference type="EMBL" id="CP000916">
    <property type="protein sequence ID" value="ACM23356.1"/>
    <property type="molecule type" value="Genomic_DNA"/>
</dbReference>
<dbReference type="RefSeq" id="WP_015919671.1">
    <property type="nucleotide sequence ID" value="NC_011978.1"/>
</dbReference>
<dbReference type="SMR" id="B9K8S3"/>
<dbReference type="STRING" id="309803.CTN_1180"/>
<dbReference type="KEGG" id="tna:CTN_1180"/>
<dbReference type="eggNOG" id="COG0548">
    <property type="taxonomic scope" value="Bacteria"/>
</dbReference>
<dbReference type="HOGENOM" id="CLU_053680_0_0_0"/>
<dbReference type="UniPathway" id="UPA00068">
    <property type="reaction ID" value="UER00107"/>
</dbReference>
<dbReference type="Proteomes" id="UP000000445">
    <property type="component" value="Chromosome"/>
</dbReference>
<dbReference type="GO" id="GO:0005737">
    <property type="term" value="C:cytoplasm"/>
    <property type="evidence" value="ECO:0007669"/>
    <property type="project" value="UniProtKB-SubCell"/>
</dbReference>
<dbReference type="GO" id="GO:0003991">
    <property type="term" value="F:acetylglutamate kinase activity"/>
    <property type="evidence" value="ECO:0007669"/>
    <property type="project" value="UniProtKB-UniRule"/>
</dbReference>
<dbReference type="GO" id="GO:0005524">
    <property type="term" value="F:ATP binding"/>
    <property type="evidence" value="ECO:0007669"/>
    <property type="project" value="UniProtKB-UniRule"/>
</dbReference>
<dbReference type="GO" id="GO:0042450">
    <property type="term" value="P:arginine biosynthetic process via ornithine"/>
    <property type="evidence" value="ECO:0007669"/>
    <property type="project" value="UniProtKB-UniRule"/>
</dbReference>
<dbReference type="GO" id="GO:0006526">
    <property type="term" value="P:L-arginine biosynthetic process"/>
    <property type="evidence" value="ECO:0007669"/>
    <property type="project" value="UniProtKB-UniPathway"/>
</dbReference>
<dbReference type="CDD" id="cd04250">
    <property type="entry name" value="AAK_NAGK-C"/>
    <property type="match status" value="1"/>
</dbReference>
<dbReference type="FunFam" id="3.40.1160.10:FF:000004">
    <property type="entry name" value="Acetylglutamate kinase"/>
    <property type="match status" value="1"/>
</dbReference>
<dbReference type="Gene3D" id="3.40.1160.10">
    <property type="entry name" value="Acetylglutamate kinase-like"/>
    <property type="match status" value="1"/>
</dbReference>
<dbReference type="HAMAP" id="MF_00082">
    <property type="entry name" value="ArgB"/>
    <property type="match status" value="1"/>
</dbReference>
<dbReference type="InterPro" id="IPR036393">
    <property type="entry name" value="AceGlu_kinase-like_sf"/>
</dbReference>
<dbReference type="InterPro" id="IPR004662">
    <property type="entry name" value="AcgluKinase_fam"/>
</dbReference>
<dbReference type="InterPro" id="IPR037528">
    <property type="entry name" value="ArgB"/>
</dbReference>
<dbReference type="InterPro" id="IPR001048">
    <property type="entry name" value="Asp/Glu/Uridylate_kinase"/>
</dbReference>
<dbReference type="InterPro" id="IPR001057">
    <property type="entry name" value="Glu/AcGlu_kinase"/>
</dbReference>
<dbReference type="InterPro" id="IPR041727">
    <property type="entry name" value="NAGK-C"/>
</dbReference>
<dbReference type="NCBIfam" id="TIGR00761">
    <property type="entry name" value="argB"/>
    <property type="match status" value="1"/>
</dbReference>
<dbReference type="PANTHER" id="PTHR23342">
    <property type="entry name" value="N-ACETYLGLUTAMATE SYNTHASE"/>
    <property type="match status" value="1"/>
</dbReference>
<dbReference type="PANTHER" id="PTHR23342:SF0">
    <property type="entry name" value="N-ACETYLGLUTAMATE SYNTHASE, MITOCHONDRIAL"/>
    <property type="match status" value="1"/>
</dbReference>
<dbReference type="Pfam" id="PF00696">
    <property type="entry name" value="AA_kinase"/>
    <property type="match status" value="1"/>
</dbReference>
<dbReference type="PIRSF" id="PIRSF000728">
    <property type="entry name" value="NAGK"/>
    <property type="match status" value="1"/>
</dbReference>
<dbReference type="PRINTS" id="PR00474">
    <property type="entry name" value="GLU5KINASE"/>
</dbReference>
<dbReference type="SUPFAM" id="SSF53633">
    <property type="entry name" value="Carbamate kinase-like"/>
    <property type="match status" value="1"/>
</dbReference>